<reference key="1">
    <citation type="submission" date="1998-11" db="EMBL/GenBank/DDBJ databases">
        <title>DNA encoding the tryptophanase gene and its flanking regions from Proteus inconstans.</title>
        <authorList>
            <person name="Nishiya Y."/>
        </authorList>
    </citation>
    <scope>NUCLEOTIDE SEQUENCE [GENOMIC DNA]</scope>
    <source>
        <strain>NBRC 12931</strain>
    </source>
</reference>
<dbReference type="EC" id="4.1.99.1"/>
<dbReference type="EMBL" id="AB019704">
    <property type="protein sequence ID" value="BAA34638.1"/>
    <property type="molecule type" value="Genomic_DNA"/>
</dbReference>
<dbReference type="SMR" id="Q9ZNA8"/>
<dbReference type="UniPathway" id="UPA00332">
    <property type="reaction ID" value="UER00452"/>
</dbReference>
<dbReference type="GO" id="GO:0009034">
    <property type="term" value="F:tryptophanase activity"/>
    <property type="evidence" value="ECO:0007669"/>
    <property type="project" value="UniProtKB-UniRule"/>
</dbReference>
<dbReference type="CDD" id="cd00617">
    <property type="entry name" value="Tnase_like"/>
    <property type="match status" value="1"/>
</dbReference>
<dbReference type="Gene3D" id="3.90.1150.10">
    <property type="entry name" value="Aspartate Aminotransferase, domain 1"/>
    <property type="match status" value="1"/>
</dbReference>
<dbReference type="Gene3D" id="3.40.640.10">
    <property type="entry name" value="Type I PLP-dependent aspartate aminotransferase-like (Major domain)"/>
    <property type="match status" value="1"/>
</dbReference>
<dbReference type="HAMAP" id="MF_00544">
    <property type="entry name" value="Tryptophanase"/>
    <property type="match status" value="1"/>
</dbReference>
<dbReference type="InterPro" id="IPR001597">
    <property type="entry name" value="ArAA_b-elim_lyase/Thr_aldolase"/>
</dbReference>
<dbReference type="InterPro" id="IPR011166">
    <property type="entry name" value="Beta-eliminating_lyase"/>
</dbReference>
<dbReference type="InterPro" id="IPR015424">
    <property type="entry name" value="PyrdxlP-dep_Trfase"/>
</dbReference>
<dbReference type="InterPro" id="IPR015421">
    <property type="entry name" value="PyrdxlP-dep_Trfase_major"/>
</dbReference>
<dbReference type="InterPro" id="IPR015422">
    <property type="entry name" value="PyrdxlP-dep_Trfase_small"/>
</dbReference>
<dbReference type="InterPro" id="IPR013440">
    <property type="entry name" value="TNase"/>
</dbReference>
<dbReference type="InterPro" id="IPR018176">
    <property type="entry name" value="Tryptophanase_CS"/>
</dbReference>
<dbReference type="NCBIfam" id="NF009709">
    <property type="entry name" value="PRK13238.1"/>
    <property type="match status" value="1"/>
</dbReference>
<dbReference type="PANTHER" id="PTHR32325">
    <property type="entry name" value="BETA-ELIMINATING LYASE-LIKE PROTEIN-RELATED"/>
    <property type="match status" value="1"/>
</dbReference>
<dbReference type="PANTHER" id="PTHR32325:SF4">
    <property type="entry name" value="TRYPTOPHANASE"/>
    <property type="match status" value="1"/>
</dbReference>
<dbReference type="Pfam" id="PF01212">
    <property type="entry name" value="Beta_elim_lyase"/>
    <property type="match status" value="1"/>
</dbReference>
<dbReference type="PIRSF" id="PIRSF001386">
    <property type="entry name" value="Trpase"/>
    <property type="match status" value="1"/>
</dbReference>
<dbReference type="SUPFAM" id="SSF53383">
    <property type="entry name" value="PLP-dependent transferases"/>
    <property type="match status" value="1"/>
</dbReference>
<dbReference type="PROSITE" id="PS00853">
    <property type="entry name" value="BETA_ELIM_LYASE"/>
    <property type="match status" value="1"/>
</dbReference>
<organism>
    <name type="scientific">Proteus inconstans</name>
    <dbReference type="NCBI Taxonomy" id="84631"/>
    <lineage>
        <taxon>Bacteria</taxon>
        <taxon>Pseudomonadati</taxon>
        <taxon>Pseudomonadota</taxon>
        <taxon>Gammaproteobacteria</taxon>
        <taxon>Enterobacterales</taxon>
        <taxon>Morganellaceae</taxon>
        <taxon>Proteus</taxon>
    </lineage>
</organism>
<accession>Q9ZNA8</accession>
<name>TNAA_PROIN</name>
<keyword id="KW-0456">Lyase</keyword>
<keyword id="KW-0663">Pyridoxal phosphate</keyword>
<keyword id="KW-0823">Tryptophan catabolism</keyword>
<proteinExistence type="inferred from homology"/>
<feature type="chain" id="PRO_0000195618" description="Tryptophanase">
    <location>
        <begin position="1"/>
        <end position="465"/>
    </location>
</feature>
<feature type="modified residue" description="N6-(pyridoxal phosphate)lysine" evidence="1">
    <location>
        <position position="264"/>
    </location>
</feature>
<evidence type="ECO:0000250" key="1"/>
<evidence type="ECO:0000305" key="2"/>
<gene>
    <name type="primary">tnaA</name>
    <name type="synonym">tna</name>
</gene>
<protein>
    <recommendedName>
        <fullName>Tryptophanase</fullName>
        <ecNumber>4.1.99.1</ecNumber>
    </recommendedName>
    <alternativeName>
        <fullName>L-tryptophan indole-lyase</fullName>
        <shortName>TNase</shortName>
    </alternativeName>
</protein>
<comment type="catalytic activity">
    <reaction>
        <text>L-tryptophan + H2O = indole + pyruvate + NH4(+)</text>
        <dbReference type="Rhea" id="RHEA:19553"/>
        <dbReference type="ChEBI" id="CHEBI:15361"/>
        <dbReference type="ChEBI" id="CHEBI:15377"/>
        <dbReference type="ChEBI" id="CHEBI:16881"/>
        <dbReference type="ChEBI" id="CHEBI:28938"/>
        <dbReference type="ChEBI" id="CHEBI:57912"/>
        <dbReference type="EC" id="4.1.99.1"/>
    </reaction>
</comment>
<comment type="cofactor">
    <cofactor evidence="1">
        <name>pyridoxal 5'-phosphate</name>
        <dbReference type="ChEBI" id="CHEBI:597326"/>
    </cofactor>
</comment>
<comment type="pathway">
    <text>Amino-acid degradation; L-tryptophan degradation via pyruvate pathway; indole and pyruvate from L-tryptophan: step 1/1.</text>
</comment>
<comment type="subunit">
    <text evidence="1">Homotetramer.</text>
</comment>
<comment type="similarity">
    <text evidence="2">Belongs to the beta-eliminating lyase family.</text>
</comment>
<sequence length="465" mass="52764">MAKRIVEPFRIKMVENIRIPSREEREVALKEAGYNPFLLPSSAVYIDLLTDSGTTRYDHHGSMITGDEAYAGSRNYYDLKDKVKEMFDYDYVIPAHQGRGAENMLFPVLLKVKQEQGGAKKPVFISNFHFDTTAAHVELNHCKAINIVTEKAYDSDTYDDWKGNFDIQKLKDNIAPEWCRKRCCHYFSITCNSAGGQPVSMANLKEVYEIAKHHNIFVVMDSARFCENAYFIKERDPKYKNATIKEIILDMYKYADALTMSAKKDPLLNIGGLVCIKNDEKIFTLARQRCVPMEGFVTYGGLAGRDMAAMVQGLEEGAGEEYLHYRIGQVKYLGDRLREGGISIQYPTGGHAVFVDCKKLVPHIPGDQFPAQAVINALYLESGVRAVEIGSFLLGRDPETGKQKHADMEFMRLTIARRVYTNDHMDYIADALIGLKDKFATLKGLDFEYEPPVLRHFTARLKPIK</sequence>